<comment type="function">
    <text evidence="1">Catalyzes the isomerization between 2-isopropylmalate and 3-isopropylmalate, via the formation of 2-isopropylmaleate.</text>
</comment>
<comment type="catalytic activity">
    <reaction evidence="1">
        <text>(2R,3S)-3-isopropylmalate = (2S)-2-isopropylmalate</text>
        <dbReference type="Rhea" id="RHEA:32287"/>
        <dbReference type="ChEBI" id="CHEBI:1178"/>
        <dbReference type="ChEBI" id="CHEBI:35121"/>
        <dbReference type="EC" id="4.2.1.33"/>
    </reaction>
</comment>
<comment type="pathway">
    <text evidence="1">Amino-acid biosynthesis; L-leucine biosynthesis; L-leucine from 3-methyl-2-oxobutanoate: step 2/4.</text>
</comment>
<comment type="subunit">
    <text evidence="1">Heterodimer of LeuC and LeuD.</text>
</comment>
<comment type="similarity">
    <text evidence="1">Belongs to the LeuD family. LeuD type 1 subfamily.</text>
</comment>
<keyword id="KW-0028">Amino-acid biosynthesis</keyword>
<keyword id="KW-0100">Branched-chain amino acid biosynthesis</keyword>
<keyword id="KW-0432">Leucine biosynthesis</keyword>
<keyword id="KW-0456">Lyase</keyword>
<organism>
    <name type="scientific">Leptospira borgpetersenii serovar Hardjo-bovis (strain JB197)</name>
    <dbReference type="NCBI Taxonomy" id="355277"/>
    <lineage>
        <taxon>Bacteria</taxon>
        <taxon>Pseudomonadati</taxon>
        <taxon>Spirochaetota</taxon>
        <taxon>Spirochaetia</taxon>
        <taxon>Leptospirales</taxon>
        <taxon>Leptospiraceae</taxon>
        <taxon>Leptospira</taxon>
    </lineage>
</organism>
<proteinExistence type="inferred from homology"/>
<accession>Q04RN8</accession>
<gene>
    <name evidence="1" type="primary">leuD</name>
    <name type="ordered locus">LBJ_1912</name>
</gene>
<name>LEUD_LEPBJ</name>
<protein>
    <recommendedName>
        <fullName evidence="1">3-isopropylmalate dehydratase small subunit</fullName>
        <ecNumber evidence="1">4.2.1.33</ecNumber>
    </recommendedName>
    <alternativeName>
        <fullName evidence="1">Alpha-IPM isomerase</fullName>
        <shortName evidence="1">IPMI</shortName>
    </alternativeName>
    <alternativeName>
        <fullName evidence="1">Isopropylmalate isomerase</fullName>
    </alternativeName>
</protein>
<evidence type="ECO:0000255" key="1">
    <source>
        <dbReference type="HAMAP-Rule" id="MF_01031"/>
    </source>
</evidence>
<feature type="chain" id="PRO_1000063778" description="3-isopropylmalate dehydratase small subunit">
    <location>
        <begin position="1"/>
        <end position="206"/>
    </location>
</feature>
<dbReference type="EC" id="4.2.1.33" evidence="1"/>
<dbReference type="EMBL" id="CP000350">
    <property type="protein sequence ID" value="ABJ76432.1"/>
    <property type="molecule type" value="Genomic_DNA"/>
</dbReference>
<dbReference type="RefSeq" id="WP_011671864.1">
    <property type="nucleotide sequence ID" value="NC_008510.1"/>
</dbReference>
<dbReference type="SMR" id="Q04RN8"/>
<dbReference type="KEGG" id="lbj:LBJ_1912"/>
<dbReference type="HOGENOM" id="CLU_081378_0_3_12"/>
<dbReference type="UniPathway" id="UPA00048">
    <property type="reaction ID" value="UER00071"/>
</dbReference>
<dbReference type="Proteomes" id="UP000000656">
    <property type="component" value="Chromosome 1"/>
</dbReference>
<dbReference type="GO" id="GO:0009316">
    <property type="term" value="C:3-isopropylmalate dehydratase complex"/>
    <property type="evidence" value="ECO:0007669"/>
    <property type="project" value="InterPro"/>
</dbReference>
<dbReference type="GO" id="GO:0003861">
    <property type="term" value="F:3-isopropylmalate dehydratase activity"/>
    <property type="evidence" value="ECO:0007669"/>
    <property type="project" value="UniProtKB-UniRule"/>
</dbReference>
<dbReference type="GO" id="GO:0009098">
    <property type="term" value="P:L-leucine biosynthetic process"/>
    <property type="evidence" value="ECO:0007669"/>
    <property type="project" value="UniProtKB-UniRule"/>
</dbReference>
<dbReference type="CDD" id="cd01577">
    <property type="entry name" value="IPMI_Swivel"/>
    <property type="match status" value="1"/>
</dbReference>
<dbReference type="FunFam" id="3.20.19.10:FF:000003">
    <property type="entry name" value="3-isopropylmalate dehydratase small subunit"/>
    <property type="match status" value="1"/>
</dbReference>
<dbReference type="Gene3D" id="3.20.19.10">
    <property type="entry name" value="Aconitase, domain 4"/>
    <property type="match status" value="1"/>
</dbReference>
<dbReference type="HAMAP" id="MF_01031">
    <property type="entry name" value="LeuD_type1"/>
    <property type="match status" value="1"/>
</dbReference>
<dbReference type="InterPro" id="IPR004431">
    <property type="entry name" value="3-IsopropMal_deHydase_ssu"/>
</dbReference>
<dbReference type="InterPro" id="IPR015928">
    <property type="entry name" value="Aconitase/3IPM_dehydase_swvl"/>
</dbReference>
<dbReference type="InterPro" id="IPR000573">
    <property type="entry name" value="AconitaseA/IPMdHydase_ssu_swvl"/>
</dbReference>
<dbReference type="InterPro" id="IPR033940">
    <property type="entry name" value="IPMI_Swivel"/>
</dbReference>
<dbReference type="InterPro" id="IPR050075">
    <property type="entry name" value="LeuD"/>
</dbReference>
<dbReference type="NCBIfam" id="TIGR00171">
    <property type="entry name" value="leuD"/>
    <property type="match status" value="1"/>
</dbReference>
<dbReference type="NCBIfam" id="NF002458">
    <property type="entry name" value="PRK01641.1"/>
    <property type="match status" value="1"/>
</dbReference>
<dbReference type="PANTHER" id="PTHR43345:SF5">
    <property type="entry name" value="3-ISOPROPYLMALATE DEHYDRATASE SMALL SUBUNIT"/>
    <property type="match status" value="1"/>
</dbReference>
<dbReference type="PANTHER" id="PTHR43345">
    <property type="entry name" value="3-ISOPROPYLMALATE DEHYDRATASE SMALL SUBUNIT 2-RELATED-RELATED"/>
    <property type="match status" value="1"/>
</dbReference>
<dbReference type="Pfam" id="PF00694">
    <property type="entry name" value="Aconitase_C"/>
    <property type="match status" value="1"/>
</dbReference>
<dbReference type="SUPFAM" id="SSF52016">
    <property type="entry name" value="LeuD/IlvD-like"/>
    <property type="match status" value="1"/>
</dbReference>
<sequence>MKPFTVLNGIAALLDRPNVDTDQIIPKQFLRKIERTGFGVHLFHDWRYLDDAGTKLNPEFSLNQERYKGASILLTRDNFGCGSSREHAPWALEDYGFRSIIAPSYADIFFNNCFKNGMLPVVLKSEEVEELFRFVSGNVGAKLQIDLDKQTVTGPTGKVYTFEVDSFRKYCLYNGLDDIGLTLKQGSKIGEFEKKQKEVEPWLYVI</sequence>
<reference key="1">
    <citation type="journal article" date="2006" name="Proc. Natl. Acad. Sci. U.S.A.">
        <title>Genome reduction in Leptospira borgpetersenii reflects limited transmission potential.</title>
        <authorList>
            <person name="Bulach D.M."/>
            <person name="Zuerner R.L."/>
            <person name="Wilson P."/>
            <person name="Seemann T."/>
            <person name="McGrath A."/>
            <person name="Cullen P.A."/>
            <person name="Davis J."/>
            <person name="Johnson M."/>
            <person name="Kuczek E."/>
            <person name="Alt D.P."/>
            <person name="Peterson-Burch B."/>
            <person name="Coppel R.L."/>
            <person name="Rood J.I."/>
            <person name="Davies J.K."/>
            <person name="Adler B."/>
        </authorList>
    </citation>
    <scope>NUCLEOTIDE SEQUENCE [LARGE SCALE GENOMIC DNA]</scope>
    <source>
        <strain>JB197</strain>
    </source>
</reference>